<name>TUSC_PSEAE</name>
<comment type="function">
    <text evidence="1">Could be part of a sulfur-relay system.</text>
</comment>
<comment type="subcellular location">
    <subcellularLocation>
        <location evidence="1">Cytoplasm</location>
    </subcellularLocation>
</comment>
<comment type="similarity">
    <text evidence="2">Belongs to the DsrF/TusC family.</text>
</comment>
<reference key="1">
    <citation type="journal article" date="2000" name="Nature">
        <title>Complete genome sequence of Pseudomonas aeruginosa PAO1, an opportunistic pathogen.</title>
        <authorList>
            <person name="Stover C.K."/>
            <person name="Pham X.-Q.T."/>
            <person name="Erwin A.L."/>
            <person name="Mizoguchi S.D."/>
            <person name="Warrener P."/>
            <person name="Hickey M.J."/>
            <person name="Brinkman F.S.L."/>
            <person name="Hufnagle W.O."/>
            <person name="Kowalik D.J."/>
            <person name="Lagrou M."/>
            <person name="Garber R.L."/>
            <person name="Goltry L."/>
            <person name="Tolentino E."/>
            <person name="Westbrock-Wadman S."/>
            <person name="Yuan Y."/>
            <person name="Brody L.L."/>
            <person name="Coulter S.N."/>
            <person name="Folger K.R."/>
            <person name="Kas A."/>
            <person name="Larbig K."/>
            <person name="Lim R.M."/>
            <person name="Smith K.A."/>
            <person name="Spencer D.H."/>
            <person name="Wong G.K.-S."/>
            <person name="Wu Z."/>
            <person name="Paulsen I.T."/>
            <person name="Reizer J."/>
            <person name="Saier M.H. Jr."/>
            <person name="Hancock R.E.W."/>
            <person name="Lory S."/>
            <person name="Olson M.V."/>
        </authorList>
    </citation>
    <scope>NUCLEOTIDE SEQUENCE [LARGE SCALE GENOMIC DNA]</scope>
    <source>
        <strain>ATCC 15692 / DSM 22644 / CIP 104116 / JCM 14847 / LMG 12228 / 1C / PRS 101 / PAO1</strain>
    </source>
</reference>
<keyword id="KW-0963">Cytoplasm</keyword>
<keyword id="KW-1185">Reference proteome</keyword>
<dbReference type="EMBL" id="AE004091">
    <property type="protein sequence ID" value="AAG05994.1"/>
    <property type="molecule type" value="Genomic_DNA"/>
</dbReference>
<dbReference type="PIR" id="A83320">
    <property type="entry name" value="A83320"/>
</dbReference>
<dbReference type="RefSeq" id="NP_251296.1">
    <property type="nucleotide sequence ID" value="NC_002516.2"/>
</dbReference>
<dbReference type="RefSeq" id="WP_003090389.1">
    <property type="nucleotide sequence ID" value="NZ_QZGE01000008.1"/>
</dbReference>
<dbReference type="SMR" id="Q9I0N2"/>
<dbReference type="FunCoup" id="Q9I0N2">
    <property type="interactions" value="91"/>
</dbReference>
<dbReference type="STRING" id="208964.PA2606"/>
<dbReference type="PaxDb" id="208964-PA2606"/>
<dbReference type="DNASU" id="882312"/>
<dbReference type="GeneID" id="882312"/>
<dbReference type="KEGG" id="pae:PA2606"/>
<dbReference type="PATRIC" id="fig|208964.12.peg.2727"/>
<dbReference type="PseudoCAP" id="PA2606"/>
<dbReference type="HOGENOM" id="CLU_155943_0_0_6"/>
<dbReference type="InParanoid" id="Q9I0N2"/>
<dbReference type="OrthoDB" id="9789418at2"/>
<dbReference type="PhylomeDB" id="Q9I0N2"/>
<dbReference type="BioCyc" id="PAER208964:G1FZ6-2646-MONOMER"/>
<dbReference type="Proteomes" id="UP000002438">
    <property type="component" value="Chromosome"/>
</dbReference>
<dbReference type="GO" id="GO:0005737">
    <property type="term" value="C:cytoplasm"/>
    <property type="evidence" value="ECO:0007669"/>
    <property type="project" value="UniProtKB-SubCell"/>
</dbReference>
<dbReference type="Gene3D" id="3.40.1260.10">
    <property type="entry name" value="DsrEFH-like"/>
    <property type="match status" value="1"/>
</dbReference>
<dbReference type="InterPro" id="IPR027396">
    <property type="entry name" value="DsrEFH-like"/>
</dbReference>
<dbReference type="InterPro" id="IPR003787">
    <property type="entry name" value="Sulphur_relay_DsrE/F-like"/>
</dbReference>
<dbReference type="InterPro" id="IPR017462">
    <property type="entry name" value="Sulphur_relay_TusC/DsrF"/>
</dbReference>
<dbReference type="NCBIfam" id="NF001238">
    <property type="entry name" value="PRK00211.1"/>
    <property type="match status" value="1"/>
</dbReference>
<dbReference type="NCBIfam" id="TIGR03010">
    <property type="entry name" value="sulf_tusC_dsrF"/>
    <property type="match status" value="1"/>
</dbReference>
<dbReference type="PANTHER" id="PTHR38780">
    <property type="entry name" value="PROTEIN TUSC"/>
    <property type="match status" value="1"/>
</dbReference>
<dbReference type="PANTHER" id="PTHR38780:SF1">
    <property type="entry name" value="PROTEIN TUSC"/>
    <property type="match status" value="1"/>
</dbReference>
<dbReference type="Pfam" id="PF02635">
    <property type="entry name" value="DsrE"/>
    <property type="match status" value="1"/>
</dbReference>
<dbReference type="SUPFAM" id="SSF75169">
    <property type="entry name" value="DsrEFH-like"/>
    <property type="match status" value="1"/>
</dbReference>
<organism>
    <name type="scientific">Pseudomonas aeruginosa (strain ATCC 15692 / DSM 22644 / CIP 104116 / JCM 14847 / LMG 12228 / 1C / PRS 101 / PAO1)</name>
    <dbReference type="NCBI Taxonomy" id="208964"/>
    <lineage>
        <taxon>Bacteria</taxon>
        <taxon>Pseudomonadati</taxon>
        <taxon>Pseudomonadota</taxon>
        <taxon>Gammaproteobacteria</taxon>
        <taxon>Pseudomonadales</taxon>
        <taxon>Pseudomonadaceae</taxon>
        <taxon>Pseudomonas</taxon>
    </lineage>
</organism>
<accession>Q9I0N2</accession>
<sequence length="119" mass="13040">MSQSLLIISRQSPWSGPSAREALDIALAGGAFDLPVGMLFLDDGAFQLAPGQHPAHLQQKDLQANLQALPMFGVDDLYVSARSLRERGLAEERLALAVEVLDDQALRDLLQRYDQVITL</sequence>
<feature type="chain" id="PRO_0000214888" description="Protein TusC homolog">
    <location>
        <begin position="1"/>
        <end position="119"/>
    </location>
</feature>
<protein>
    <recommendedName>
        <fullName>Protein TusC homolog</fullName>
    </recommendedName>
</protein>
<evidence type="ECO:0000250" key="1"/>
<evidence type="ECO:0000305" key="2"/>
<gene>
    <name type="primary">tusC</name>
    <name type="ordered locus">PA2606</name>
</gene>
<proteinExistence type="inferred from homology"/>